<organism>
    <name type="scientific">Macrococcus caseolyticus (strain JCSC5402)</name>
    <name type="common">Macrococcoides caseolyticum</name>
    <dbReference type="NCBI Taxonomy" id="458233"/>
    <lineage>
        <taxon>Bacteria</taxon>
        <taxon>Bacillati</taxon>
        <taxon>Bacillota</taxon>
        <taxon>Bacilli</taxon>
        <taxon>Bacillales</taxon>
        <taxon>Staphylococcaceae</taxon>
        <taxon>Macrococcoides</taxon>
    </lineage>
</organism>
<keyword id="KW-0030">Aminoacyl-tRNA synthetase</keyword>
<keyword id="KW-0067">ATP-binding</keyword>
<keyword id="KW-0963">Cytoplasm</keyword>
<keyword id="KW-0436">Ligase</keyword>
<keyword id="KW-0547">Nucleotide-binding</keyword>
<keyword id="KW-0648">Protein biosynthesis</keyword>
<keyword id="KW-1185">Reference proteome</keyword>
<name>SYD_MACCJ</name>
<reference key="1">
    <citation type="journal article" date="2009" name="J. Bacteriol.">
        <title>Complete genome sequence of Macrococcus caseolyticus strain JCSCS5402, reflecting the ancestral genome of the human-pathogenic staphylococci.</title>
        <authorList>
            <person name="Baba T."/>
            <person name="Kuwahara-Arai K."/>
            <person name="Uchiyama I."/>
            <person name="Takeuchi F."/>
            <person name="Ito T."/>
            <person name="Hiramatsu K."/>
        </authorList>
    </citation>
    <scope>NUCLEOTIDE SEQUENCE [LARGE SCALE GENOMIC DNA]</scope>
    <source>
        <strain>JCSC5402</strain>
    </source>
</reference>
<protein>
    <recommendedName>
        <fullName evidence="1">Aspartate--tRNA ligase</fullName>
        <ecNumber evidence="1">6.1.1.12</ecNumber>
    </recommendedName>
    <alternativeName>
        <fullName evidence="1">Aspartyl-tRNA synthetase</fullName>
        <shortName evidence="1">AspRS</shortName>
    </alternativeName>
</protein>
<proteinExistence type="inferred from homology"/>
<sequence length="592" mass="67420">MDNRTTYCGLVTESYIGQEIILKGWVQKRRDLGGLIFIDLRDREGVVQIVFNPDFSKEALTIAETIRSEYVIEVHGKVTMRDEAVINPKIKTGKVEVQVSEVTIINKSETPPFQIEAETDSSEDVRLKYRYLDLRREPLANTFKMRHQITRAVRNYLDESGFYEVETPVLTKSTPEGARDYLVPSRVQEGEFYALPQSPQIFKQLLMIGGFDKYYQIVKCFRDEDLRADRQPEFTQIDIEMSFVDQEDVMSMNEGMLKRIMKDVKGIDIATPFPRMTYEEAMRDYGIDKPDTRFDMKLVTLNDLASKMEFKVFKGAVESGGAVKAIVVKGASDKYSRKDIDALQEYAKIYGAKGLAWVKVTEDGLNGPIAKFFEESHASELLDATNAEMGDLILFVADKWSVVNASLANLRNKLGKELGLIDENKYNFLWVTDWPLFEYDEELDRYFAAHHPFTAPKKEHVEMLKTDKEKVQANAYDVVLNGYELGGGSIRIHDQEMQKKMFEALGFSDEEAQEQFGFLMDAFKYGAPPHGGIALGLDRMVMLLSGRSNLRDVIAFPKTASATCLLTDAPSKVDDKQLEELHIQLNIENSEK</sequence>
<gene>
    <name evidence="1" type="primary">aspS</name>
    <name type="ordered locus">MCCL_1267</name>
</gene>
<evidence type="ECO:0000255" key="1">
    <source>
        <dbReference type="HAMAP-Rule" id="MF_00044"/>
    </source>
</evidence>
<feature type="chain" id="PRO_1000198997" description="Aspartate--tRNA ligase">
    <location>
        <begin position="1"/>
        <end position="592"/>
    </location>
</feature>
<feature type="region of interest" description="Aspartate" evidence="1">
    <location>
        <begin position="200"/>
        <end position="203"/>
    </location>
</feature>
<feature type="binding site" evidence="1">
    <location>
        <position position="176"/>
    </location>
    <ligand>
        <name>L-aspartate</name>
        <dbReference type="ChEBI" id="CHEBI:29991"/>
    </ligand>
</feature>
<feature type="binding site" evidence="1">
    <location>
        <begin position="222"/>
        <end position="224"/>
    </location>
    <ligand>
        <name>ATP</name>
        <dbReference type="ChEBI" id="CHEBI:30616"/>
    </ligand>
</feature>
<feature type="binding site" evidence="1">
    <location>
        <position position="222"/>
    </location>
    <ligand>
        <name>L-aspartate</name>
        <dbReference type="ChEBI" id="CHEBI:29991"/>
    </ligand>
</feature>
<feature type="binding site" evidence="1">
    <location>
        <position position="231"/>
    </location>
    <ligand>
        <name>ATP</name>
        <dbReference type="ChEBI" id="CHEBI:30616"/>
    </ligand>
</feature>
<feature type="binding site" evidence="1">
    <location>
        <position position="450"/>
    </location>
    <ligand>
        <name>L-aspartate</name>
        <dbReference type="ChEBI" id="CHEBI:29991"/>
    </ligand>
</feature>
<feature type="binding site" evidence="1">
    <location>
        <position position="484"/>
    </location>
    <ligand>
        <name>ATP</name>
        <dbReference type="ChEBI" id="CHEBI:30616"/>
    </ligand>
</feature>
<feature type="binding site" evidence="1">
    <location>
        <position position="491"/>
    </location>
    <ligand>
        <name>L-aspartate</name>
        <dbReference type="ChEBI" id="CHEBI:29991"/>
    </ligand>
</feature>
<feature type="binding site" evidence="1">
    <location>
        <begin position="536"/>
        <end position="539"/>
    </location>
    <ligand>
        <name>ATP</name>
        <dbReference type="ChEBI" id="CHEBI:30616"/>
    </ligand>
</feature>
<dbReference type="EC" id="6.1.1.12" evidence="1"/>
<dbReference type="EMBL" id="AP009484">
    <property type="protein sequence ID" value="BAH17974.1"/>
    <property type="molecule type" value="Genomic_DNA"/>
</dbReference>
<dbReference type="RefSeq" id="WP_012657172.1">
    <property type="nucleotide sequence ID" value="NC_011999.1"/>
</dbReference>
<dbReference type="SMR" id="B9E706"/>
<dbReference type="STRING" id="458233.MCCL_1267"/>
<dbReference type="KEGG" id="mcl:MCCL_1267"/>
<dbReference type="eggNOG" id="COG0173">
    <property type="taxonomic scope" value="Bacteria"/>
</dbReference>
<dbReference type="HOGENOM" id="CLU_014330_3_2_9"/>
<dbReference type="OrthoDB" id="9802326at2"/>
<dbReference type="Proteomes" id="UP000001383">
    <property type="component" value="Chromosome"/>
</dbReference>
<dbReference type="GO" id="GO:0005737">
    <property type="term" value="C:cytoplasm"/>
    <property type="evidence" value="ECO:0007669"/>
    <property type="project" value="UniProtKB-SubCell"/>
</dbReference>
<dbReference type="GO" id="GO:0004815">
    <property type="term" value="F:aspartate-tRNA ligase activity"/>
    <property type="evidence" value="ECO:0007669"/>
    <property type="project" value="UniProtKB-UniRule"/>
</dbReference>
<dbReference type="GO" id="GO:0005524">
    <property type="term" value="F:ATP binding"/>
    <property type="evidence" value="ECO:0007669"/>
    <property type="project" value="UniProtKB-UniRule"/>
</dbReference>
<dbReference type="GO" id="GO:0140096">
    <property type="term" value="F:catalytic activity, acting on a protein"/>
    <property type="evidence" value="ECO:0007669"/>
    <property type="project" value="UniProtKB-ARBA"/>
</dbReference>
<dbReference type="GO" id="GO:0003676">
    <property type="term" value="F:nucleic acid binding"/>
    <property type="evidence" value="ECO:0007669"/>
    <property type="project" value="InterPro"/>
</dbReference>
<dbReference type="GO" id="GO:0016740">
    <property type="term" value="F:transferase activity"/>
    <property type="evidence" value="ECO:0007669"/>
    <property type="project" value="UniProtKB-ARBA"/>
</dbReference>
<dbReference type="GO" id="GO:0006422">
    <property type="term" value="P:aspartyl-tRNA aminoacylation"/>
    <property type="evidence" value="ECO:0007669"/>
    <property type="project" value="UniProtKB-UniRule"/>
</dbReference>
<dbReference type="CDD" id="cd00777">
    <property type="entry name" value="AspRS_core"/>
    <property type="match status" value="1"/>
</dbReference>
<dbReference type="CDD" id="cd04317">
    <property type="entry name" value="EcAspRS_like_N"/>
    <property type="match status" value="1"/>
</dbReference>
<dbReference type="Gene3D" id="3.30.930.10">
    <property type="entry name" value="Bira Bifunctional Protein, Domain 2"/>
    <property type="match status" value="1"/>
</dbReference>
<dbReference type="Gene3D" id="3.30.1360.30">
    <property type="entry name" value="GAD-like domain"/>
    <property type="match status" value="1"/>
</dbReference>
<dbReference type="Gene3D" id="2.40.50.140">
    <property type="entry name" value="Nucleic acid-binding proteins"/>
    <property type="match status" value="1"/>
</dbReference>
<dbReference type="HAMAP" id="MF_00044">
    <property type="entry name" value="Asp_tRNA_synth_type1"/>
    <property type="match status" value="1"/>
</dbReference>
<dbReference type="InterPro" id="IPR004364">
    <property type="entry name" value="Aa-tRNA-synt_II"/>
</dbReference>
<dbReference type="InterPro" id="IPR006195">
    <property type="entry name" value="aa-tRNA-synth_II"/>
</dbReference>
<dbReference type="InterPro" id="IPR045864">
    <property type="entry name" value="aa-tRNA-synth_II/BPL/LPL"/>
</dbReference>
<dbReference type="InterPro" id="IPR004524">
    <property type="entry name" value="Asp-tRNA-ligase_1"/>
</dbReference>
<dbReference type="InterPro" id="IPR047089">
    <property type="entry name" value="Asp-tRNA-ligase_1_N"/>
</dbReference>
<dbReference type="InterPro" id="IPR002312">
    <property type="entry name" value="Asp/Asn-tRNA-synth_IIb"/>
</dbReference>
<dbReference type="InterPro" id="IPR047090">
    <property type="entry name" value="AspRS_core"/>
</dbReference>
<dbReference type="InterPro" id="IPR004115">
    <property type="entry name" value="GAD-like_sf"/>
</dbReference>
<dbReference type="InterPro" id="IPR029351">
    <property type="entry name" value="GAD_dom"/>
</dbReference>
<dbReference type="InterPro" id="IPR012340">
    <property type="entry name" value="NA-bd_OB-fold"/>
</dbReference>
<dbReference type="InterPro" id="IPR004365">
    <property type="entry name" value="NA-bd_OB_tRNA"/>
</dbReference>
<dbReference type="NCBIfam" id="TIGR00459">
    <property type="entry name" value="aspS_bact"/>
    <property type="match status" value="1"/>
</dbReference>
<dbReference type="NCBIfam" id="NF001750">
    <property type="entry name" value="PRK00476.1"/>
    <property type="match status" value="1"/>
</dbReference>
<dbReference type="PANTHER" id="PTHR22594:SF5">
    <property type="entry name" value="ASPARTATE--TRNA LIGASE, MITOCHONDRIAL"/>
    <property type="match status" value="1"/>
</dbReference>
<dbReference type="PANTHER" id="PTHR22594">
    <property type="entry name" value="ASPARTYL/LYSYL-TRNA SYNTHETASE"/>
    <property type="match status" value="1"/>
</dbReference>
<dbReference type="Pfam" id="PF02938">
    <property type="entry name" value="GAD"/>
    <property type="match status" value="1"/>
</dbReference>
<dbReference type="Pfam" id="PF00152">
    <property type="entry name" value="tRNA-synt_2"/>
    <property type="match status" value="1"/>
</dbReference>
<dbReference type="Pfam" id="PF01336">
    <property type="entry name" value="tRNA_anti-codon"/>
    <property type="match status" value="1"/>
</dbReference>
<dbReference type="PRINTS" id="PR01042">
    <property type="entry name" value="TRNASYNTHASP"/>
</dbReference>
<dbReference type="SUPFAM" id="SSF55681">
    <property type="entry name" value="Class II aaRS and biotin synthetases"/>
    <property type="match status" value="1"/>
</dbReference>
<dbReference type="SUPFAM" id="SSF55261">
    <property type="entry name" value="GAD domain-like"/>
    <property type="match status" value="1"/>
</dbReference>
<dbReference type="SUPFAM" id="SSF50249">
    <property type="entry name" value="Nucleic acid-binding proteins"/>
    <property type="match status" value="1"/>
</dbReference>
<dbReference type="PROSITE" id="PS50862">
    <property type="entry name" value="AA_TRNA_LIGASE_II"/>
    <property type="match status" value="1"/>
</dbReference>
<accession>B9E706</accession>
<comment type="function">
    <text evidence="1">Catalyzes the attachment of L-aspartate to tRNA(Asp) in a two-step reaction: L-aspartate is first activated by ATP to form Asp-AMP and then transferred to the acceptor end of tRNA(Asp).</text>
</comment>
<comment type="catalytic activity">
    <reaction evidence="1">
        <text>tRNA(Asp) + L-aspartate + ATP = L-aspartyl-tRNA(Asp) + AMP + diphosphate</text>
        <dbReference type="Rhea" id="RHEA:19649"/>
        <dbReference type="Rhea" id="RHEA-COMP:9660"/>
        <dbReference type="Rhea" id="RHEA-COMP:9678"/>
        <dbReference type="ChEBI" id="CHEBI:29991"/>
        <dbReference type="ChEBI" id="CHEBI:30616"/>
        <dbReference type="ChEBI" id="CHEBI:33019"/>
        <dbReference type="ChEBI" id="CHEBI:78442"/>
        <dbReference type="ChEBI" id="CHEBI:78516"/>
        <dbReference type="ChEBI" id="CHEBI:456215"/>
        <dbReference type="EC" id="6.1.1.12"/>
    </reaction>
</comment>
<comment type="subunit">
    <text evidence="1">Homodimer.</text>
</comment>
<comment type="subcellular location">
    <subcellularLocation>
        <location evidence="1">Cytoplasm</location>
    </subcellularLocation>
</comment>
<comment type="similarity">
    <text evidence="1">Belongs to the class-II aminoacyl-tRNA synthetase family. Type 1 subfamily.</text>
</comment>